<evidence type="ECO:0000250" key="1">
    <source>
        <dbReference type="UniProtKB" id="P38712"/>
    </source>
</evidence>
<evidence type="ECO:0000255" key="2">
    <source>
        <dbReference type="PROSITE-ProRule" id="PRU00541"/>
    </source>
</evidence>
<evidence type="ECO:0000255" key="3">
    <source>
        <dbReference type="PROSITE-ProRule" id="PRU00542"/>
    </source>
</evidence>
<evidence type="ECO:0000256" key="4">
    <source>
        <dbReference type="SAM" id="MobiDB-lite"/>
    </source>
</evidence>
<evidence type="ECO:0000305" key="5"/>
<accession>A2RB17</accession>
<feature type="chain" id="PRO_0000282695" description="ATP-dependent rRNA helicase rrp3">
    <location>
        <begin position="1"/>
        <end position="467"/>
    </location>
</feature>
<feature type="domain" description="Helicase ATP-binding" evidence="2">
    <location>
        <begin position="79"/>
        <end position="250"/>
    </location>
</feature>
<feature type="domain" description="Helicase C-terminal" evidence="3">
    <location>
        <begin position="262"/>
        <end position="422"/>
    </location>
</feature>
<feature type="region of interest" description="Disordered" evidence="4">
    <location>
        <begin position="1"/>
        <end position="48"/>
    </location>
</feature>
<feature type="region of interest" description="Disordered" evidence="4">
    <location>
        <begin position="439"/>
        <end position="467"/>
    </location>
</feature>
<feature type="short sequence motif" description="Q motif" evidence="5">
    <location>
        <begin position="48"/>
        <end position="76"/>
    </location>
</feature>
<feature type="short sequence motif" description="DEAD box" evidence="5">
    <location>
        <begin position="198"/>
        <end position="201"/>
    </location>
</feature>
<feature type="binding site" evidence="2">
    <location>
        <begin position="92"/>
        <end position="99"/>
    </location>
    <ligand>
        <name>ATP</name>
        <dbReference type="ChEBI" id="CHEBI:30616"/>
    </ligand>
</feature>
<dbReference type="EC" id="3.6.4.13" evidence="1"/>
<dbReference type="EMBL" id="AM270408">
    <property type="protein sequence ID" value="CAK43313.1"/>
    <property type="molecule type" value="Genomic_DNA"/>
</dbReference>
<dbReference type="RefSeq" id="XP_001398969.1">
    <property type="nucleotide sequence ID" value="XM_001398932.2"/>
</dbReference>
<dbReference type="SMR" id="A2RB17"/>
<dbReference type="EnsemblFungi" id="CAK43313">
    <property type="protein sequence ID" value="CAK43313"/>
    <property type="gene ID" value="An18g05150"/>
</dbReference>
<dbReference type="GeneID" id="4990081"/>
<dbReference type="KEGG" id="ang:An18g05150"/>
<dbReference type="VEuPathDB" id="FungiDB:An18g05150"/>
<dbReference type="HOGENOM" id="CLU_003041_1_1_1"/>
<dbReference type="Proteomes" id="UP000006706">
    <property type="component" value="Chromosome 8L"/>
</dbReference>
<dbReference type="GO" id="GO:0005829">
    <property type="term" value="C:cytosol"/>
    <property type="evidence" value="ECO:0007669"/>
    <property type="project" value="TreeGrafter"/>
</dbReference>
<dbReference type="GO" id="GO:0005634">
    <property type="term" value="C:nucleus"/>
    <property type="evidence" value="ECO:0007669"/>
    <property type="project" value="UniProtKB-SubCell"/>
</dbReference>
<dbReference type="GO" id="GO:0005524">
    <property type="term" value="F:ATP binding"/>
    <property type="evidence" value="ECO:0007669"/>
    <property type="project" value="UniProtKB-KW"/>
</dbReference>
<dbReference type="GO" id="GO:0016887">
    <property type="term" value="F:ATP hydrolysis activity"/>
    <property type="evidence" value="ECO:0007669"/>
    <property type="project" value="RHEA"/>
</dbReference>
<dbReference type="GO" id="GO:0003723">
    <property type="term" value="F:RNA binding"/>
    <property type="evidence" value="ECO:0007669"/>
    <property type="project" value="UniProtKB-KW"/>
</dbReference>
<dbReference type="GO" id="GO:0003724">
    <property type="term" value="F:RNA helicase activity"/>
    <property type="evidence" value="ECO:0007669"/>
    <property type="project" value="UniProtKB-EC"/>
</dbReference>
<dbReference type="GO" id="GO:0006364">
    <property type="term" value="P:rRNA processing"/>
    <property type="evidence" value="ECO:0007669"/>
    <property type="project" value="UniProtKB-KW"/>
</dbReference>
<dbReference type="CDD" id="cd17954">
    <property type="entry name" value="DEADc_DDX47"/>
    <property type="match status" value="1"/>
</dbReference>
<dbReference type="CDD" id="cd18787">
    <property type="entry name" value="SF2_C_DEAD"/>
    <property type="match status" value="1"/>
</dbReference>
<dbReference type="FunFam" id="3.40.50.300:FF:000681">
    <property type="entry name" value="probable ATP-dependent RNA helicase DDX47"/>
    <property type="match status" value="1"/>
</dbReference>
<dbReference type="Gene3D" id="3.40.50.300">
    <property type="entry name" value="P-loop containing nucleotide triphosphate hydrolases"/>
    <property type="match status" value="2"/>
</dbReference>
<dbReference type="InterPro" id="IPR044765">
    <property type="entry name" value="DDX47/Rrp3_DEADc"/>
</dbReference>
<dbReference type="InterPro" id="IPR011545">
    <property type="entry name" value="DEAD/DEAH_box_helicase_dom"/>
</dbReference>
<dbReference type="InterPro" id="IPR050079">
    <property type="entry name" value="DEAD_box_RNA_helicase"/>
</dbReference>
<dbReference type="InterPro" id="IPR014001">
    <property type="entry name" value="Helicase_ATP-bd"/>
</dbReference>
<dbReference type="InterPro" id="IPR001650">
    <property type="entry name" value="Helicase_C-like"/>
</dbReference>
<dbReference type="InterPro" id="IPR027417">
    <property type="entry name" value="P-loop_NTPase"/>
</dbReference>
<dbReference type="InterPro" id="IPR000629">
    <property type="entry name" value="RNA-helicase_DEAD-box_CS"/>
</dbReference>
<dbReference type="InterPro" id="IPR014014">
    <property type="entry name" value="RNA_helicase_DEAD_Q_motif"/>
</dbReference>
<dbReference type="PANTHER" id="PTHR47959">
    <property type="entry name" value="ATP-DEPENDENT RNA HELICASE RHLE-RELATED"/>
    <property type="match status" value="1"/>
</dbReference>
<dbReference type="PANTHER" id="PTHR47959:SF20">
    <property type="entry name" value="RNA HELICASE"/>
    <property type="match status" value="1"/>
</dbReference>
<dbReference type="Pfam" id="PF00270">
    <property type="entry name" value="DEAD"/>
    <property type="match status" value="1"/>
</dbReference>
<dbReference type="Pfam" id="PF00271">
    <property type="entry name" value="Helicase_C"/>
    <property type="match status" value="1"/>
</dbReference>
<dbReference type="SMART" id="SM00487">
    <property type="entry name" value="DEXDc"/>
    <property type="match status" value="1"/>
</dbReference>
<dbReference type="SMART" id="SM00490">
    <property type="entry name" value="HELICc"/>
    <property type="match status" value="1"/>
</dbReference>
<dbReference type="SUPFAM" id="SSF52540">
    <property type="entry name" value="P-loop containing nucleoside triphosphate hydrolases"/>
    <property type="match status" value="1"/>
</dbReference>
<dbReference type="PROSITE" id="PS00039">
    <property type="entry name" value="DEAD_ATP_HELICASE"/>
    <property type="match status" value="1"/>
</dbReference>
<dbReference type="PROSITE" id="PS51192">
    <property type="entry name" value="HELICASE_ATP_BIND_1"/>
    <property type="match status" value="1"/>
</dbReference>
<dbReference type="PROSITE" id="PS51194">
    <property type="entry name" value="HELICASE_CTER"/>
    <property type="match status" value="1"/>
</dbReference>
<dbReference type="PROSITE" id="PS51195">
    <property type="entry name" value="Q_MOTIF"/>
    <property type="match status" value="1"/>
</dbReference>
<keyword id="KW-0067">ATP-binding</keyword>
<keyword id="KW-0347">Helicase</keyword>
<keyword id="KW-0378">Hydrolase</keyword>
<keyword id="KW-0547">Nucleotide-binding</keyword>
<keyword id="KW-0539">Nucleus</keyword>
<keyword id="KW-1185">Reference proteome</keyword>
<keyword id="KW-0690">Ribosome biogenesis</keyword>
<keyword id="KW-0694">RNA-binding</keyword>
<keyword id="KW-0698">rRNA processing</keyword>
<protein>
    <recommendedName>
        <fullName evidence="5">ATP-dependent rRNA helicase rrp3</fullName>
        <ecNumber evidence="1">3.6.4.13</ecNumber>
    </recommendedName>
</protein>
<gene>
    <name evidence="1" type="primary">rrp3</name>
    <name type="ORF">An18g05150</name>
</gene>
<proteinExistence type="inferred from homology"/>
<name>RRP3_ASPNC</name>
<sequence>MPGVKKRKVAREAPAPAPAQESDVESSTPEQTQEPEAQEQEQEEGQSKTFKELGIIEQLCEACETMGYKAPTPIQRESIPLALKGRDLIGLAETGSGKTAAFALPILQALMEKPQPFFGLVLAPTRELAYQISKSFESLGASMGVRSCVIVGGMDMVSQSISLGKKPHIIVATPGRLLDHLENTKGFSLRNLKYLVMDEADRLLDMDFGPLLDKILKVLPRERRTFLFSATMSSKVESLQRASLSNPLRVSVSTSKYQTVSTLLQSYLFIPQKHKDLYLVYLLNEFAGQSTIIFTRTVNETQRLAFLLRALGFGAIPLHGQLSQSARLGALGKFRARSRNILVATDVAARGLDIPSVDVVLNFDLPGDSPSYVHRVGRTARAGKSGLAISFVAQYDVEVWLRIEGALGKKLKEYDCPKDEVMVLGENVAEAQRQAIMDMKDYNEKKGSRGKKFGGKRSRDEMDQEEG</sequence>
<comment type="function">
    <text evidence="1">ATP-dependent rRNA helicase required for pre-ribosomal RNA processing. Involved in the maturation of the 35S-pre-rRNA and to its cleavage to mature 18S rRNA.</text>
</comment>
<comment type="catalytic activity">
    <reaction evidence="1">
        <text>ATP + H2O = ADP + phosphate + H(+)</text>
        <dbReference type="Rhea" id="RHEA:13065"/>
        <dbReference type="ChEBI" id="CHEBI:15377"/>
        <dbReference type="ChEBI" id="CHEBI:15378"/>
        <dbReference type="ChEBI" id="CHEBI:30616"/>
        <dbReference type="ChEBI" id="CHEBI:43474"/>
        <dbReference type="ChEBI" id="CHEBI:456216"/>
        <dbReference type="EC" id="3.6.4.13"/>
    </reaction>
</comment>
<comment type="subunit">
    <text evidence="1">Interacts with the SSU processome.</text>
</comment>
<comment type="subcellular location">
    <subcellularLocation>
        <location evidence="5">Nucleus</location>
    </subcellularLocation>
</comment>
<comment type="domain">
    <text evidence="5">The Q motif is unique to and characteristic of the DEAD box family of RNA helicases and controls ATP binding and hydrolysis.</text>
</comment>
<comment type="similarity">
    <text evidence="5">Belongs to the DEAD box helicase family. DDX47/RRP3 subfamily.</text>
</comment>
<reference key="1">
    <citation type="journal article" date="2007" name="Nat. Biotechnol.">
        <title>Genome sequencing and analysis of the versatile cell factory Aspergillus niger CBS 513.88.</title>
        <authorList>
            <person name="Pel H.J."/>
            <person name="de Winde J.H."/>
            <person name="Archer D.B."/>
            <person name="Dyer P.S."/>
            <person name="Hofmann G."/>
            <person name="Schaap P.J."/>
            <person name="Turner G."/>
            <person name="de Vries R.P."/>
            <person name="Albang R."/>
            <person name="Albermann K."/>
            <person name="Andersen M.R."/>
            <person name="Bendtsen J.D."/>
            <person name="Benen J.A.E."/>
            <person name="van den Berg M."/>
            <person name="Breestraat S."/>
            <person name="Caddick M.X."/>
            <person name="Contreras R."/>
            <person name="Cornell M."/>
            <person name="Coutinho P.M."/>
            <person name="Danchin E.G.J."/>
            <person name="Debets A.J.M."/>
            <person name="Dekker P."/>
            <person name="van Dijck P.W.M."/>
            <person name="van Dijk A."/>
            <person name="Dijkhuizen L."/>
            <person name="Driessen A.J.M."/>
            <person name="d'Enfert C."/>
            <person name="Geysens S."/>
            <person name="Goosen C."/>
            <person name="Groot G.S.P."/>
            <person name="de Groot P.W.J."/>
            <person name="Guillemette T."/>
            <person name="Henrissat B."/>
            <person name="Herweijer M."/>
            <person name="van den Hombergh J.P.T.W."/>
            <person name="van den Hondel C.A.M.J.J."/>
            <person name="van der Heijden R.T.J.M."/>
            <person name="van der Kaaij R.M."/>
            <person name="Klis F.M."/>
            <person name="Kools H.J."/>
            <person name="Kubicek C.P."/>
            <person name="van Kuyk P.A."/>
            <person name="Lauber J."/>
            <person name="Lu X."/>
            <person name="van der Maarel M.J.E.C."/>
            <person name="Meulenberg R."/>
            <person name="Menke H."/>
            <person name="Mortimer M.A."/>
            <person name="Nielsen J."/>
            <person name="Oliver S.G."/>
            <person name="Olsthoorn M."/>
            <person name="Pal K."/>
            <person name="van Peij N.N.M.E."/>
            <person name="Ram A.F.J."/>
            <person name="Rinas U."/>
            <person name="Roubos J.A."/>
            <person name="Sagt C.M.J."/>
            <person name="Schmoll M."/>
            <person name="Sun J."/>
            <person name="Ussery D."/>
            <person name="Varga J."/>
            <person name="Vervecken W."/>
            <person name="van de Vondervoort P.J.J."/>
            <person name="Wedler H."/>
            <person name="Woesten H.A.B."/>
            <person name="Zeng A.-P."/>
            <person name="van Ooyen A.J.J."/>
            <person name="Visser J."/>
            <person name="Stam H."/>
        </authorList>
    </citation>
    <scope>NUCLEOTIDE SEQUENCE [LARGE SCALE GENOMIC DNA]</scope>
    <source>
        <strain>ATCC MYA-4892 / CBS 513.88 / FGSC A1513</strain>
    </source>
</reference>
<organism>
    <name type="scientific">Aspergillus niger (strain ATCC MYA-4892 / CBS 513.88 / FGSC A1513)</name>
    <dbReference type="NCBI Taxonomy" id="425011"/>
    <lineage>
        <taxon>Eukaryota</taxon>
        <taxon>Fungi</taxon>
        <taxon>Dikarya</taxon>
        <taxon>Ascomycota</taxon>
        <taxon>Pezizomycotina</taxon>
        <taxon>Eurotiomycetes</taxon>
        <taxon>Eurotiomycetidae</taxon>
        <taxon>Eurotiales</taxon>
        <taxon>Aspergillaceae</taxon>
        <taxon>Aspergillus</taxon>
        <taxon>Aspergillus subgen. Circumdati</taxon>
    </lineage>
</organism>